<dbReference type="EMBL" id="L36455">
    <property type="protein sequence ID" value="AAA65100.1"/>
    <property type="molecule type" value="Genomic_DNA"/>
</dbReference>
<dbReference type="EMBL" id="AE016828">
    <property type="protein sequence ID" value="AAO90795.1"/>
    <property type="molecule type" value="Genomic_DNA"/>
</dbReference>
<dbReference type="PIR" id="I40843">
    <property type="entry name" value="I40843"/>
</dbReference>
<dbReference type="RefSeq" id="NP_820281.1">
    <property type="nucleotide sequence ID" value="NC_002971.4"/>
</dbReference>
<dbReference type="RefSeq" id="WP_010958131.1">
    <property type="nucleotide sequence ID" value="NC_002971.4"/>
</dbReference>
<dbReference type="SMR" id="P42381"/>
<dbReference type="STRING" id="227377.CBU_1289"/>
<dbReference type="EnsemblBacteria" id="AAO90795">
    <property type="protein sequence ID" value="AAO90795"/>
    <property type="gene ID" value="CBU_1289"/>
</dbReference>
<dbReference type="GeneID" id="1209194"/>
<dbReference type="KEGG" id="cbu:CBU_1289"/>
<dbReference type="PATRIC" id="fig|227377.7.peg.1284"/>
<dbReference type="eggNOG" id="COG0484">
    <property type="taxonomic scope" value="Bacteria"/>
</dbReference>
<dbReference type="HOGENOM" id="CLU_017633_0_7_6"/>
<dbReference type="OrthoDB" id="9779889at2"/>
<dbReference type="Proteomes" id="UP000002671">
    <property type="component" value="Chromosome"/>
</dbReference>
<dbReference type="GO" id="GO:0005737">
    <property type="term" value="C:cytoplasm"/>
    <property type="evidence" value="ECO:0000318"/>
    <property type="project" value="GO_Central"/>
</dbReference>
<dbReference type="GO" id="GO:0005524">
    <property type="term" value="F:ATP binding"/>
    <property type="evidence" value="ECO:0007669"/>
    <property type="project" value="InterPro"/>
</dbReference>
<dbReference type="GO" id="GO:0031072">
    <property type="term" value="F:heat shock protein binding"/>
    <property type="evidence" value="ECO:0007669"/>
    <property type="project" value="InterPro"/>
</dbReference>
<dbReference type="GO" id="GO:0051082">
    <property type="term" value="F:unfolded protein binding"/>
    <property type="evidence" value="ECO:0000318"/>
    <property type="project" value="GO_Central"/>
</dbReference>
<dbReference type="GO" id="GO:0008270">
    <property type="term" value="F:zinc ion binding"/>
    <property type="evidence" value="ECO:0007669"/>
    <property type="project" value="UniProtKB-UniRule"/>
</dbReference>
<dbReference type="GO" id="GO:0051085">
    <property type="term" value="P:chaperone cofactor-dependent protein refolding"/>
    <property type="evidence" value="ECO:0000318"/>
    <property type="project" value="GO_Central"/>
</dbReference>
<dbReference type="GO" id="GO:0006260">
    <property type="term" value="P:DNA replication"/>
    <property type="evidence" value="ECO:0007669"/>
    <property type="project" value="UniProtKB-KW"/>
</dbReference>
<dbReference type="GO" id="GO:0042026">
    <property type="term" value="P:protein refolding"/>
    <property type="evidence" value="ECO:0000318"/>
    <property type="project" value="GO_Central"/>
</dbReference>
<dbReference type="GO" id="GO:0009408">
    <property type="term" value="P:response to heat"/>
    <property type="evidence" value="ECO:0007669"/>
    <property type="project" value="InterPro"/>
</dbReference>
<dbReference type="CDD" id="cd06257">
    <property type="entry name" value="DnaJ"/>
    <property type="match status" value="1"/>
</dbReference>
<dbReference type="CDD" id="cd10747">
    <property type="entry name" value="DnaJ_C"/>
    <property type="match status" value="1"/>
</dbReference>
<dbReference type="CDD" id="cd10719">
    <property type="entry name" value="DnaJ_zf"/>
    <property type="match status" value="1"/>
</dbReference>
<dbReference type="FunFam" id="1.10.287.110:FF:000160">
    <property type="entry name" value="Chaperone protein DnaJ"/>
    <property type="match status" value="1"/>
</dbReference>
<dbReference type="FunFam" id="2.10.230.10:FF:000002">
    <property type="entry name" value="Molecular chaperone DnaJ"/>
    <property type="match status" value="1"/>
</dbReference>
<dbReference type="FunFam" id="2.60.260.20:FF:000004">
    <property type="entry name" value="Molecular chaperone DnaJ"/>
    <property type="match status" value="1"/>
</dbReference>
<dbReference type="Gene3D" id="1.10.287.110">
    <property type="entry name" value="DnaJ domain"/>
    <property type="match status" value="1"/>
</dbReference>
<dbReference type="Gene3D" id="2.10.230.10">
    <property type="entry name" value="Heat shock protein DnaJ, cysteine-rich domain"/>
    <property type="match status" value="1"/>
</dbReference>
<dbReference type="Gene3D" id="2.60.260.20">
    <property type="entry name" value="Urease metallochaperone UreE, N-terminal domain"/>
    <property type="match status" value="2"/>
</dbReference>
<dbReference type="HAMAP" id="MF_01152">
    <property type="entry name" value="DnaJ"/>
    <property type="match status" value="1"/>
</dbReference>
<dbReference type="InterPro" id="IPR012724">
    <property type="entry name" value="DnaJ"/>
</dbReference>
<dbReference type="InterPro" id="IPR002939">
    <property type="entry name" value="DnaJ_C"/>
</dbReference>
<dbReference type="InterPro" id="IPR001623">
    <property type="entry name" value="DnaJ_domain"/>
</dbReference>
<dbReference type="InterPro" id="IPR018253">
    <property type="entry name" value="DnaJ_domain_CS"/>
</dbReference>
<dbReference type="InterPro" id="IPR008971">
    <property type="entry name" value="HSP40/DnaJ_pept-bd"/>
</dbReference>
<dbReference type="InterPro" id="IPR001305">
    <property type="entry name" value="HSP_DnaJ_Cys-rich_dom"/>
</dbReference>
<dbReference type="InterPro" id="IPR036410">
    <property type="entry name" value="HSP_DnaJ_Cys-rich_dom_sf"/>
</dbReference>
<dbReference type="InterPro" id="IPR036869">
    <property type="entry name" value="J_dom_sf"/>
</dbReference>
<dbReference type="NCBIfam" id="TIGR02349">
    <property type="entry name" value="DnaJ_bact"/>
    <property type="match status" value="1"/>
</dbReference>
<dbReference type="NCBIfam" id="NF008035">
    <property type="entry name" value="PRK10767.1"/>
    <property type="match status" value="1"/>
</dbReference>
<dbReference type="PANTHER" id="PTHR43096:SF48">
    <property type="entry name" value="CHAPERONE PROTEIN DNAJ"/>
    <property type="match status" value="1"/>
</dbReference>
<dbReference type="PANTHER" id="PTHR43096">
    <property type="entry name" value="DNAJ HOMOLOG 1, MITOCHONDRIAL-RELATED"/>
    <property type="match status" value="1"/>
</dbReference>
<dbReference type="Pfam" id="PF00226">
    <property type="entry name" value="DnaJ"/>
    <property type="match status" value="1"/>
</dbReference>
<dbReference type="Pfam" id="PF01556">
    <property type="entry name" value="DnaJ_C"/>
    <property type="match status" value="1"/>
</dbReference>
<dbReference type="Pfam" id="PF00684">
    <property type="entry name" value="DnaJ_CXXCXGXG"/>
    <property type="match status" value="1"/>
</dbReference>
<dbReference type="PRINTS" id="PR00625">
    <property type="entry name" value="JDOMAIN"/>
</dbReference>
<dbReference type="SMART" id="SM00271">
    <property type="entry name" value="DnaJ"/>
    <property type="match status" value="1"/>
</dbReference>
<dbReference type="SUPFAM" id="SSF46565">
    <property type="entry name" value="Chaperone J-domain"/>
    <property type="match status" value="1"/>
</dbReference>
<dbReference type="SUPFAM" id="SSF57938">
    <property type="entry name" value="DnaJ/Hsp40 cysteine-rich domain"/>
    <property type="match status" value="1"/>
</dbReference>
<dbReference type="SUPFAM" id="SSF49493">
    <property type="entry name" value="HSP40/DnaJ peptide-binding domain"/>
    <property type="match status" value="2"/>
</dbReference>
<dbReference type="PROSITE" id="PS00636">
    <property type="entry name" value="DNAJ_1"/>
    <property type="match status" value="1"/>
</dbReference>
<dbReference type="PROSITE" id="PS50076">
    <property type="entry name" value="DNAJ_2"/>
    <property type="match status" value="1"/>
</dbReference>
<dbReference type="PROSITE" id="PS51188">
    <property type="entry name" value="ZF_CR"/>
    <property type="match status" value="1"/>
</dbReference>
<comment type="function">
    <text evidence="1">Participates actively in the response to hyperosmotic and heat shock by preventing the aggregation of stress-denatured proteins and by disaggregating proteins, also in an autonomous, DnaK-independent fashion. Unfolded proteins bind initially to DnaJ; upon interaction with the DnaJ-bound protein, DnaK hydrolyzes its bound ATP, resulting in the formation of a stable complex. GrpE releases ADP from DnaK; ATP binding to DnaK triggers the release of the substrate protein, thus completing the reaction cycle. Several rounds of ATP-dependent interactions between DnaJ, DnaK and GrpE are required for fully efficient folding. Also involved, together with DnaK and GrpE, in the DNA replication of plasmids through activation of initiation proteins.</text>
</comment>
<comment type="cofactor">
    <cofactor evidence="1">
        <name>Zn(2+)</name>
        <dbReference type="ChEBI" id="CHEBI:29105"/>
    </cofactor>
    <text evidence="1">Binds 2 Zn(2+) ions per monomer.</text>
</comment>
<comment type="subunit">
    <text evidence="1">Homodimer.</text>
</comment>
<comment type="subcellular location">
    <subcellularLocation>
        <location evidence="1">Cytoplasm</location>
    </subcellularLocation>
</comment>
<comment type="domain">
    <text evidence="1">The J domain is necessary and sufficient to stimulate DnaK ATPase activity. Zinc center 1 plays an important role in the autonomous, DnaK-independent chaperone activity of DnaJ. Zinc center 2 is essential for interaction with DnaK and for DnaJ activity.</text>
</comment>
<comment type="similarity">
    <text evidence="1">Belongs to the DnaJ family.</text>
</comment>
<reference key="1">
    <citation type="journal article" date="1995" name="Gene">
        <title>Cloning, sequencing and expression of the dnaJ gene of Coxiella burnetii.</title>
        <authorList>
            <person name="Zuber M."/>
            <person name="Hoover T.A."/>
            <person name="Court D.L."/>
        </authorList>
    </citation>
    <scope>NUCLEOTIDE SEQUENCE [GENOMIC DNA]</scope>
    <source>
        <strain>Nine Mile</strain>
    </source>
</reference>
<reference key="2">
    <citation type="journal article" date="2003" name="Proc. Natl. Acad. Sci. U.S.A.">
        <title>Complete genome sequence of the Q-fever pathogen, Coxiella burnetii.</title>
        <authorList>
            <person name="Seshadri R."/>
            <person name="Paulsen I.T."/>
            <person name="Eisen J.A."/>
            <person name="Read T.D."/>
            <person name="Nelson K.E."/>
            <person name="Nelson W.C."/>
            <person name="Ward N.L."/>
            <person name="Tettelin H."/>
            <person name="Davidsen T.M."/>
            <person name="Beanan M.J."/>
            <person name="DeBoy R.T."/>
            <person name="Daugherty S.C."/>
            <person name="Brinkac L.M."/>
            <person name="Madupu R."/>
            <person name="Dodson R.J."/>
            <person name="Khouri H.M."/>
            <person name="Lee K.H."/>
            <person name="Carty H.A."/>
            <person name="Scanlan D."/>
            <person name="Heinzen R.A."/>
            <person name="Thompson H.A."/>
            <person name="Samuel J.E."/>
            <person name="Fraser C.M."/>
            <person name="Heidelberg J.F."/>
        </authorList>
    </citation>
    <scope>NUCLEOTIDE SEQUENCE [LARGE SCALE GENOMIC DNA]</scope>
    <source>
        <strain>RSA 493 / Nine Mile phase I</strain>
    </source>
</reference>
<proteinExistence type="inferred from homology"/>
<organism>
    <name type="scientific">Coxiella burnetii (strain RSA 493 / Nine Mile phase I)</name>
    <dbReference type="NCBI Taxonomy" id="227377"/>
    <lineage>
        <taxon>Bacteria</taxon>
        <taxon>Pseudomonadati</taxon>
        <taxon>Pseudomonadota</taxon>
        <taxon>Gammaproteobacteria</taxon>
        <taxon>Legionellales</taxon>
        <taxon>Coxiellaceae</taxon>
        <taxon>Coxiella</taxon>
    </lineage>
</organism>
<feature type="chain" id="PRO_0000070772" description="Chaperone protein DnaJ">
    <location>
        <begin position="1"/>
        <end position="374"/>
    </location>
</feature>
<feature type="domain" description="J" evidence="1">
    <location>
        <begin position="5"/>
        <end position="70"/>
    </location>
</feature>
<feature type="repeat" description="CXXCXGXG motif">
    <location>
        <begin position="146"/>
        <end position="153"/>
    </location>
</feature>
<feature type="repeat" description="CXXCXGXG motif">
    <location>
        <begin position="162"/>
        <end position="169"/>
    </location>
</feature>
<feature type="repeat" description="CXXCXGXG motif">
    <location>
        <begin position="184"/>
        <end position="191"/>
    </location>
</feature>
<feature type="repeat" description="CXXCXGXG motif">
    <location>
        <begin position="198"/>
        <end position="205"/>
    </location>
</feature>
<feature type="zinc finger region" description="CR-type" evidence="1">
    <location>
        <begin position="133"/>
        <end position="210"/>
    </location>
</feature>
<feature type="binding site" evidence="1">
    <location>
        <position position="146"/>
    </location>
    <ligand>
        <name>Zn(2+)</name>
        <dbReference type="ChEBI" id="CHEBI:29105"/>
        <label>1</label>
    </ligand>
</feature>
<feature type="binding site" evidence="1">
    <location>
        <position position="149"/>
    </location>
    <ligand>
        <name>Zn(2+)</name>
        <dbReference type="ChEBI" id="CHEBI:29105"/>
        <label>1</label>
    </ligand>
</feature>
<feature type="binding site" evidence="1">
    <location>
        <position position="162"/>
    </location>
    <ligand>
        <name>Zn(2+)</name>
        <dbReference type="ChEBI" id="CHEBI:29105"/>
        <label>2</label>
    </ligand>
</feature>
<feature type="binding site" evidence="1">
    <location>
        <position position="165"/>
    </location>
    <ligand>
        <name>Zn(2+)</name>
        <dbReference type="ChEBI" id="CHEBI:29105"/>
        <label>2</label>
    </ligand>
</feature>
<feature type="binding site" evidence="1">
    <location>
        <position position="184"/>
    </location>
    <ligand>
        <name>Zn(2+)</name>
        <dbReference type="ChEBI" id="CHEBI:29105"/>
        <label>2</label>
    </ligand>
</feature>
<feature type="binding site" evidence="1">
    <location>
        <position position="187"/>
    </location>
    <ligand>
        <name>Zn(2+)</name>
        <dbReference type="ChEBI" id="CHEBI:29105"/>
        <label>2</label>
    </ligand>
</feature>
<feature type="binding site" evidence="1">
    <location>
        <position position="198"/>
    </location>
    <ligand>
        <name>Zn(2+)</name>
        <dbReference type="ChEBI" id="CHEBI:29105"/>
        <label>1</label>
    </ligand>
</feature>
<feature type="binding site" evidence="1">
    <location>
        <position position="201"/>
    </location>
    <ligand>
        <name>Zn(2+)</name>
        <dbReference type="ChEBI" id="CHEBI:29105"/>
        <label>1</label>
    </ligand>
</feature>
<feature type="sequence conflict" description="In Ref. 1; AAA65100." evidence="2" ref="1">
    <original>DSVKDFFTSK</original>
    <variation>GTV</variation>
    <location>
        <begin position="365"/>
        <end position="374"/>
    </location>
</feature>
<name>DNAJ_COXBU</name>
<keyword id="KW-0143">Chaperone</keyword>
<keyword id="KW-0963">Cytoplasm</keyword>
<keyword id="KW-0235">DNA replication</keyword>
<keyword id="KW-0479">Metal-binding</keyword>
<keyword id="KW-1185">Reference proteome</keyword>
<keyword id="KW-0677">Repeat</keyword>
<keyword id="KW-0346">Stress response</keyword>
<keyword id="KW-0862">Zinc</keyword>
<keyword id="KW-0863">Zinc-finger</keyword>
<evidence type="ECO:0000255" key="1">
    <source>
        <dbReference type="HAMAP-Rule" id="MF_01152"/>
    </source>
</evidence>
<evidence type="ECO:0000305" key="2"/>
<accession>P42381</accession>
<protein>
    <recommendedName>
        <fullName evidence="1">Chaperone protein DnaJ</fullName>
    </recommendedName>
</protein>
<gene>
    <name evidence="1" type="primary">dnaJ</name>
    <name type="ordered locus">CBU_1289</name>
</gene>
<sequence length="374" mass="40856">MAKRDYYEVLGVNLNATEAEVKKAFRRLAMKYHPDRNPGDKDAEVKFKEAREAYEVLCDSRKRASYDQFGHAGVEQTFGGAGAGGFGFGDLGDIFGDIFGDIFGGARGGQAREQRGADLAYELVLSLEEAVHGLSRTIKVPTWINCKTCNGSGAKGSSPATCPRCNGSGQMRMQHGFLQVQQTCSVCRGRGQVIKDPCTDCHGQGRQQQTKTLSVKIPPGIDTGDRIRLAGEGEAGLFGAPPGDLYVQVRVKPHPLFHREGNDLHSEVPIDFTTAALGGEMEIPTLDGSVRLTIPPETQGGKQFRLRGKGVKALRSGAVGDLICHIVVETPVKLSPEQKDYLKQFAELLKKDEKNHSPRTRNWFDSVKDFFTSK</sequence>